<protein>
    <recommendedName>
        <fullName evidence="1">Glycine--tRNA ligase alpha subunit</fullName>
        <ecNumber evidence="1">6.1.1.14</ecNumber>
    </recommendedName>
    <alternativeName>
        <fullName evidence="1">Glycyl-tRNA synthetase alpha subunit</fullName>
        <shortName evidence="1">GlyRS</shortName>
    </alternativeName>
</protein>
<keyword id="KW-0030">Aminoacyl-tRNA synthetase</keyword>
<keyword id="KW-0067">ATP-binding</keyword>
<keyword id="KW-0963">Cytoplasm</keyword>
<keyword id="KW-0436">Ligase</keyword>
<keyword id="KW-0547">Nucleotide-binding</keyword>
<keyword id="KW-0648">Protein biosynthesis</keyword>
<comment type="catalytic activity">
    <reaction evidence="1">
        <text>tRNA(Gly) + glycine + ATP = glycyl-tRNA(Gly) + AMP + diphosphate</text>
        <dbReference type="Rhea" id="RHEA:16013"/>
        <dbReference type="Rhea" id="RHEA-COMP:9664"/>
        <dbReference type="Rhea" id="RHEA-COMP:9683"/>
        <dbReference type="ChEBI" id="CHEBI:30616"/>
        <dbReference type="ChEBI" id="CHEBI:33019"/>
        <dbReference type="ChEBI" id="CHEBI:57305"/>
        <dbReference type="ChEBI" id="CHEBI:78442"/>
        <dbReference type="ChEBI" id="CHEBI:78522"/>
        <dbReference type="ChEBI" id="CHEBI:456215"/>
        <dbReference type="EC" id="6.1.1.14"/>
    </reaction>
</comment>
<comment type="subunit">
    <text evidence="1">Tetramer of two alpha and two beta subunits.</text>
</comment>
<comment type="subcellular location">
    <subcellularLocation>
        <location evidence="1">Cytoplasm</location>
    </subcellularLocation>
</comment>
<comment type="similarity">
    <text evidence="1">Belongs to the class-II aminoacyl-tRNA synthetase family.</text>
</comment>
<evidence type="ECO:0000255" key="1">
    <source>
        <dbReference type="HAMAP-Rule" id="MF_00254"/>
    </source>
</evidence>
<name>SYGA_SALHS</name>
<dbReference type="EC" id="6.1.1.14" evidence="1"/>
<dbReference type="EMBL" id="CP001120">
    <property type="protein sequence ID" value="ACF68114.1"/>
    <property type="molecule type" value="Genomic_DNA"/>
</dbReference>
<dbReference type="RefSeq" id="WP_001168551.1">
    <property type="nucleotide sequence ID" value="NC_011083.1"/>
</dbReference>
<dbReference type="SMR" id="B4T946"/>
<dbReference type="GeneID" id="89546728"/>
<dbReference type="KEGG" id="seh:SeHA_C3978"/>
<dbReference type="HOGENOM" id="CLU_057066_1_0_6"/>
<dbReference type="Proteomes" id="UP000001866">
    <property type="component" value="Chromosome"/>
</dbReference>
<dbReference type="GO" id="GO:0005829">
    <property type="term" value="C:cytosol"/>
    <property type="evidence" value="ECO:0007669"/>
    <property type="project" value="TreeGrafter"/>
</dbReference>
<dbReference type="GO" id="GO:0005524">
    <property type="term" value="F:ATP binding"/>
    <property type="evidence" value="ECO:0007669"/>
    <property type="project" value="UniProtKB-UniRule"/>
</dbReference>
<dbReference type="GO" id="GO:0004820">
    <property type="term" value="F:glycine-tRNA ligase activity"/>
    <property type="evidence" value="ECO:0007669"/>
    <property type="project" value="UniProtKB-UniRule"/>
</dbReference>
<dbReference type="GO" id="GO:0006426">
    <property type="term" value="P:glycyl-tRNA aminoacylation"/>
    <property type="evidence" value="ECO:0007669"/>
    <property type="project" value="UniProtKB-UniRule"/>
</dbReference>
<dbReference type="CDD" id="cd00733">
    <property type="entry name" value="GlyRS_alpha_core"/>
    <property type="match status" value="1"/>
</dbReference>
<dbReference type="FunFam" id="1.20.58.180:FF:000001">
    <property type="entry name" value="Glycine--tRNA ligase alpha subunit"/>
    <property type="match status" value="1"/>
</dbReference>
<dbReference type="FunFam" id="3.30.930.10:FF:000006">
    <property type="entry name" value="Glycine--tRNA ligase alpha subunit"/>
    <property type="match status" value="1"/>
</dbReference>
<dbReference type="Gene3D" id="3.30.930.10">
    <property type="entry name" value="Bira Bifunctional Protein, Domain 2"/>
    <property type="match status" value="1"/>
</dbReference>
<dbReference type="Gene3D" id="1.20.58.180">
    <property type="entry name" value="Class II aaRS and biotin synthetases, domain 2"/>
    <property type="match status" value="1"/>
</dbReference>
<dbReference type="HAMAP" id="MF_00254">
    <property type="entry name" value="Gly_tRNA_synth_alpha"/>
    <property type="match status" value="1"/>
</dbReference>
<dbReference type="InterPro" id="IPR045864">
    <property type="entry name" value="aa-tRNA-synth_II/BPL/LPL"/>
</dbReference>
<dbReference type="InterPro" id="IPR006194">
    <property type="entry name" value="Gly-tRNA-synth_heterodimer"/>
</dbReference>
<dbReference type="InterPro" id="IPR002310">
    <property type="entry name" value="Gly-tRNA_ligase_asu"/>
</dbReference>
<dbReference type="NCBIfam" id="TIGR00388">
    <property type="entry name" value="glyQ"/>
    <property type="match status" value="1"/>
</dbReference>
<dbReference type="NCBIfam" id="NF006827">
    <property type="entry name" value="PRK09348.1"/>
    <property type="match status" value="1"/>
</dbReference>
<dbReference type="PANTHER" id="PTHR30075:SF2">
    <property type="entry name" value="GLYCINE--TRNA LIGASE, CHLOROPLASTIC_MITOCHONDRIAL 2"/>
    <property type="match status" value="1"/>
</dbReference>
<dbReference type="PANTHER" id="PTHR30075">
    <property type="entry name" value="GLYCYL-TRNA SYNTHETASE"/>
    <property type="match status" value="1"/>
</dbReference>
<dbReference type="Pfam" id="PF02091">
    <property type="entry name" value="tRNA-synt_2e"/>
    <property type="match status" value="1"/>
</dbReference>
<dbReference type="PRINTS" id="PR01044">
    <property type="entry name" value="TRNASYNTHGA"/>
</dbReference>
<dbReference type="SUPFAM" id="SSF55681">
    <property type="entry name" value="Class II aaRS and biotin synthetases"/>
    <property type="match status" value="1"/>
</dbReference>
<dbReference type="PROSITE" id="PS50861">
    <property type="entry name" value="AA_TRNA_LIGASE_II_GLYAB"/>
    <property type="match status" value="1"/>
</dbReference>
<feature type="chain" id="PRO_1000101227" description="Glycine--tRNA ligase alpha subunit">
    <location>
        <begin position="1"/>
        <end position="303"/>
    </location>
</feature>
<organism>
    <name type="scientific">Salmonella heidelberg (strain SL476)</name>
    <dbReference type="NCBI Taxonomy" id="454169"/>
    <lineage>
        <taxon>Bacteria</taxon>
        <taxon>Pseudomonadati</taxon>
        <taxon>Pseudomonadota</taxon>
        <taxon>Gammaproteobacteria</taxon>
        <taxon>Enterobacterales</taxon>
        <taxon>Enterobacteriaceae</taxon>
        <taxon>Salmonella</taxon>
    </lineage>
</organism>
<sequence>MQKFDTRTFQGLILTLQDYWARQGCTIVQPLDMEVGAGTSHPMTCLRALGPEPMATAYVQPSRRPTDGRYGENPNRLQHYYQFQVVIKPSPDNIQELYLGSLKELGMDPTIHDIRFVEDNWENPTLGAWGLGWEVWLNGMEVTQFTYFQQVGGLECKPVTGEITYGLERLAMYIQGVDSVYDLVWSDGPLGKTTYGDVFHQNEVEQSTYNFEYADVDFLFTCFEQYEKEAQQLLALENPLPLPAYERILKAAHSFNLLDARKAISVTERQRYILRIRTLTKAVAEAYYASREALGFPMCNKDK</sequence>
<gene>
    <name evidence="1" type="primary">glyQ</name>
    <name type="ordered locus">SeHA_C3978</name>
</gene>
<reference key="1">
    <citation type="journal article" date="2011" name="J. Bacteriol.">
        <title>Comparative genomics of 28 Salmonella enterica isolates: evidence for CRISPR-mediated adaptive sublineage evolution.</title>
        <authorList>
            <person name="Fricke W.F."/>
            <person name="Mammel M.K."/>
            <person name="McDermott P.F."/>
            <person name="Tartera C."/>
            <person name="White D.G."/>
            <person name="Leclerc J.E."/>
            <person name="Ravel J."/>
            <person name="Cebula T.A."/>
        </authorList>
    </citation>
    <scope>NUCLEOTIDE SEQUENCE [LARGE SCALE GENOMIC DNA]</scope>
    <source>
        <strain>SL476</strain>
    </source>
</reference>
<accession>B4T946</accession>
<proteinExistence type="inferred from homology"/>